<gene>
    <name evidence="1" type="primary">folD</name>
    <name type="ordered locus">TV1047</name>
    <name type="ORF">TVG1072456</name>
</gene>
<proteinExistence type="inferred from homology"/>
<feature type="chain" id="PRO_0000268590" description="Bifunctional protein FolD">
    <location>
        <begin position="1"/>
        <end position="281"/>
    </location>
</feature>
<feature type="binding site" evidence="1">
    <location>
        <begin position="159"/>
        <end position="161"/>
    </location>
    <ligand>
        <name>NADP(+)</name>
        <dbReference type="ChEBI" id="CHEBI:58349"/>
    </ligand>
</feature>
<feature type="binding site" evidence="1">
    <location>
        <position position="184"/>
    </location>
    <ligand>
        <name>NADP(+)</name>
        <dbReference type="ChEBI" id="CHEBI:58349"/>
    </ligand>
</feature>
<feature type="binding site" evidence="1">
    <location>
        <position position="225"/>
    </location>
    <ligand>
        <name>NADP(+)</name>
        <dbReference type="ChEBI" id="CHEBI:58349"/>
    </ligand>
</feature>
<name>FOLD_THEVO</name>
<evidence type="ECO:0000255" key="1">
    <source>
        <dbReference type="HAMAP-Rule" id="MF_01576"/>
    </source>
</evidence>
<comment type="function">
    <text evidence="1">Catalyzes the oxidation of 5,10-methylenetetrahydrofolate to 5,10-methenyltetrahydrofolate and then the hydrolysis of 5,10-methenyltetrahydrofolate to 10-formyltetrahydrofolate.</text>
</comment>
<comment type="catalytic activity">
    <reaction evidence="1">
        <text>(6R)-5,10-methylene-5,6,7,8-tetrahydrofolate + NADP(+) = (6R)-5,10-methenyltetrahydrofolate + NADPH</text>
        <dbReference type="Rhea" id="RHEA:22812"/>
        <dbReference type="ChEBI" id="CHEBI:15636"/>
        <dbReference type="ChEBI" id="CHEBI:57455"/>
        <dbReference type="ChEBI" id="CHEBI:57783"/>
        <dbReference type="ChEBI" id="CHEBI:58349"/>
        <dbReference type="EC" id="1.5.1.5"/>
    </reaction>
</comment>
<comment type="catalytic activity">
    <reaction evidence="1">
        <text>(6R)-5,10-methenyltetrahydrofolate + H2O = (6R)-10-formyltetrahydrofolate + H(+)</text>
        <dbReference type="Rhea" id="RHEA:23700"/>
        <dbReference type="ChEBI" id="CHEBI:15377"/>
        <dbReference type="ChEBI" id="CHEBI:15378"/>
        <dbReference type="ChEBI" id="CHEBI:57455"/>
        <dbReference type="ChEBI" id="CHEBI:195366"/>
        <dbReference type="EC" id="3.5.4.9"/>
    </reaction>
</comment>
<comment type="pathway">
    <text evidence="1">One-carbon metabolism; tetrahydrofolate interconversion.</text>
</comment>
<comment type="subunit">
    <text evidence="1">Homodimer.</text>
</comment>
<comment type="similarity">
    <text evidence="1">Belongs to the tetrahydrofolate dehydrogenase/cyclohydrolase family.</text>
</comment>
<protein>
    <recommendedName>
        <fullName evidence="1">Bifunctional protein FolD</fullName>
    </recommendedName>
    <domain>
        <recommendedName>
            <fullName evidence="1">Methylenetetrahydrofolate dehydrogenase</fullName>
            <ecNumber evidence="1">1.5.1.5</ecNumber>
        </recommendedName>
    </domain>
    <domain>
        <recommendedName>
            <fullName evidence="1">Methenyltetrahydrofolate cyclohydrolase</fullName>
            <ecNumber evidence="1">3.5.4.9</ecNumber>
        </recommendedName>
    </domain>
</protein>
<keyword id="KW-0028">Amino-acid biosynthesis</keyword>
<keyword id="KW-0368">Histidine biosynthesis</keyword>
<keyword id="KW-0378">Hydrolase</keyword>
<keyword id="KW-0486">Methionine biosynthesis</keyword>
<keyword id="KW-0511">Multifunctional enzyme</keyword>
<keyword id="KW-0521">NADP</keyword>
<keyword id="KW-0554">One-carbon metabolism</keyword>
<keyword id="KW-0560">Oxidoreductase</keyword>
<keyword id="KW-0658">Purine biosynthesis</keyword>
<accession>Q979W3</accession>
<reference key="1">
    <citation type="journal article" date="2000" name="Proc. Natl. Acad. Sci. U.S.A.">
        <title>Archaeal adaptation to higher temperatures revealed by genomic sequence of Thermoplasma volcanium.</title>
        <authorList>
            <person name="Kawashima T."/>
            <person name="Amano N."/>
            <person name="Koike H."/>
            <person name="Makino S."/>
            <person name="Higuchi S."/>
            <person name="Kawashima-Ohya Y."/>
            <person name="Watanabe K."/>
            <person name="Yamazaki M."/>
            <person name="Kanehori K."/>
            <person name="Kawamoto T."/>
            <person name="Nunoshiba T."/>
            <person name="Yamamoto Y."/>
            <person name="Aramaki H."/>
            <person name="Makino K."/>
            <person name="Suzuki M."/>
        </authorList>
    </citation>
    <scope>NUCLEOTIDE SEQUENCE [LARGE SCALE GENOMIC DNA]</scope>
    <source>
        <strain>ATCC 51530 / DSM 4299 / JCM 9571 / NBRC 15438 / GSS1</strain>
    </source>
</reference>
<sequence>MAVKLLKGEEIAEKKAEELKERIEKMGVSPRLVLLQVGNYSAATIYARAKIKRGKKIGADVVLEKYEDLTKQELVRRIEELSADKDVNGIMVENPLPKTIDYYDIVKSIPYYKDVDALSPYNQGSIAINREFLVPATAMAVVDILKYYGYEKTTATIINRSPVVGRPLSMMMLNRDYTVSICHSKTPDIRSIAKASKIIVVAVGRPGFLDDTYVTESSVVIDVGINYVQDKVIGDIDFDKVSEKVEAVTPVPGGVGPITATNILSNLVKAAEYQSNTNIGR</sequence>
<dbReference type="EC" id="1.5.1.5" evidence="1"/>
<dbReference type="EC" id="3.5.4.9" evidence="1"/>
<dbReference type="EMBL" id="BA000011">
    <property type="protein sequence ID" value="BAB60189.1"/>
    <property type="molecule type" value="Genomic_DNA"/>
</dbReference>
<dbReference type="RefSeq" id="WP_010917276.1">
    <property type="nucleotide sequence ID" value="NC_002689.2"/>
</dbReference>
<dbReference type="SMR" id="Q979W3"/>
<dbReference type="STRING" id="273116.gene:9381841"/>
<dbReference type="PaxDb" id="273116-14325285"/>
<dbReference type="GeneID" id="1441158"/>
<dbReference type="KEGG" id="tvo:TVG1072456"/>
<dbReference type="eggNOG" id="arCOG04538">
    <property type="taxonomic scope" value="Archaea"/>
</dbReference>
<dbReference type="HOGENOM" id="CLU_034045_2_1_2"/>
<dbReference type="OrthoDB" id="9455at2157"/>
<dbReference type="PhylomeDB" id="Q979W3"/>
<dbReference type="UniPathway" id="UPA00193"/>
<dbReference type="Proteomes" id="UP000001017">
    <property type="component" value="Chromosome"/>
</dbReference>
<dbReference type="GO" id="GO:0005829">
    <property type="term" value="C:cytosol"/>
    <property type="evidence" value="ECO:0007669"/>
    <property type="project" value="TreeGrafter"/>
</dbReference>
<dbReference type="GO" id="GO:0004477">
    <property type="term" value="F:methenyltetrahydrofolate cyclohydrolase activity"/>
    <property type="evidence" value="ECO:0007669"/>
    <property type="project" value="UniProtKB-UniRule"/>
</dbReference>
<dbReference type="GO" id="GO:0004488">
    <property type="term" value="F:methylenetetrahydrofolate dehydrogenase (NADP+) activity"/>
    <property type="evidence" value="ECO:0007669"/>
    <property type="project" value="UniProtKB-UniRule"/>
</dbReference>
<dbReference type="GO" id="GO:0000105">
    <property type="term" value="P:L-histidine biosynthetic process"/>
    <property type="evidence" value="ECO:0007669"/>
    <property type="project" value="UniProtKB-KW"/>
</dbReference>
<dbReference type="GO" id="GO:0009086">
    <property type="term" value="P:methionine biosynthetic process"/>
    <property type="evidence" value="ECO:0007669"/>
    <property type="project" value="UniProtKB-KW"/>
</dbReference>
<dbReference type="GO" id="GO:0006164">
    <property type="term" value="P:purine nucleotide biosynthetic process"/>
    <property type="evidence" value="ECO:0007669"/>
    <property type="project" value="UniProtKB-KW"/>
</dbReference>
<dbReference type="GO" id="GO:0035999">
    <property type="term" value="P:tetrahydrofolate interconversion"/>
    <property type="evidence" value="ECO:0007669"/>
    <property type="project" value="UniProtKB-UniRule"/>
</dbReference>
<dbReference type="CDD" id="cd01080">
    <property type="entry name" value="NAD_bind_m-THF_DH_Cyclohyd"/>
    <property type="match status" value="1"/>
</dbReference>
<dbReference type="Gene3D" id="3.40.50.10860">
    <property type="entry name" value="Leucine Dehydrogenase, chain A, domain 1"/>
    <property type="match status" value="1"/>
</dbReference>
<dbReference type="Gene3D" id="3.40.50.720">
    <property type="entry name" value="NAD(P)-binding Rossmann-like Domain"/>
    <property type="match status" value="1"/>
</dbReference>
<dbReference type="HAMAP" id="MF_01576">
    <property type="entry name" value="THF_DHG_CYH"/>
    <property type="match status" value="1"/>
</dbReference>
<dbReference type="InterPro" id="IPR046346">
    <property type="entry name" value="Aminoacid_DH-like_N_sf"/>
</dbReference>
<dbReference type="InterPro" id="IPR054993">
    <property type="entry name" value="FolD_Thplmales"/>
</dbReference>
<dbReference type="InterPro" id="IPR036291">
    <property type="entry name" value="NAD(P)-bd_dom_sf"/>
</dbReference>
<dbReference type="InterPro" id="IPR000672">
    <property type="entry name" value="THF_DH/CycHdrlase"/>
</dbReference>
<dbReference type="InterPro" id="IPR020630">
    <property type="entry name" value="THF_DH/CycHdrlase_cat_dom"/>
</dbReference>
<dbReference type="InterPro" id="IPR020867">
    <property type="entry name" value="THF_DH/CycHdrlase_CS"/>
</dbReference>
<dbReference type="InterPro" id="IPR020631">
    <property type="entry name" value="THF_DH/CycHdrlase_NAD-bd_dom"/>
</dbReference>
<dbReference type="NCBIfam" id="NF041156">
    <property type="entry name" value="FolD_Thplmales"/>
    <property type="match status" value="1"/>
</dbReference>
<dbReference type="PANTHER" id="PTHR48099:SF5">
    <property type="entry name" value="C-1-TETRAHYDROFOLATE SYNTHASE, CYTOPLASMIC"/>
    <property type="match status" value="1"/>
</dbReference>
<dbReference type="PANTHER" id="PTHR48099">
    <property type="entry name" value="C-1-TETRAHYDROFOLATE SYNTHASE, CYTOPLASMIC-RELATED"/>
    <property type="match status" value="1"/>
</dbReference>
<dbReference type="Pfam" id="PF00763">
    <property type="entry name" value="THF_DHG_CYH"/>
    <property type="match status" value="1"/>
</dbReference>
<dbReference type="Pfam" id="PF02882">
    <property type="entry name" value="THF_DHG_CYH_C"/>
    <property type="match status" value="1"/>
</dbReference>
<dbReference type="PRINTS" id="PR00085">
    <property type="entry name" value="THFDHDRGNASE"/>
</dbReference>
<dbReference type="SUPFAM" id="SSF53223">
    <property type="entry name" value="Aminoacid dehydrogenase-like, N-terminal domain"/>
    <property type="match status" value="1"/>
</dbReference>
<dbReference type="SUPFAM" id="SSF51735">
    <property type="entry name" value="NAD(P)-binding Rossmann-fold domains"/>
    <property type="match status" value="1"/>
</dbReference>
<dbReference type="PROSITE" id="PS00767">
    <property type="entry name" value="THF_DHG_CYH_2"/>
    <property type="match status" value="1"/>
</dbReference>
<organism>
    <name type="scientific">Thermoplasma volcanium (strain ATCC 51530 / DSM 4299 / JCM 9571 / NBRC 15438 / GSS1)</name>
    <dbReference type="NCBI Taxonomy" id="273116"/>
    <lineage>
        <taxon>Archaea</taxon>
        <taxon>Methanobacteriati</taxon>
        <taxon>Thermoplasmatota</taxon>
        <taxon>Thermoplasmata</taxon>
        <taxon>Thermoplasmatales</taxon>
        <taxon>Thermoplasmataceae</taxon>
        <taxon>Thermoplasma</taxon>
    </lineage>
</organism>